<evidence type="ECO:0000255" key="1">
    <source>
        <dbReference type="HAMAP-Rule" id="MF_00377"/>
    </source>
</evidence>
<evidence type="ECO:0000256" key="2">
    <source>
        <dbReference type="SAM" id="MobiDB-lite"/>
    </source>
</evidence>
<reference key="1">
    <citation type="submission" date="2009-03" db="EMBL/GenBank/DDBJ databases">
        <title>Comparison of the complete genome sequences of Rhodococcus erythropolis PR4 and Rhodococcus opacus B4.</title>
        <authorList>
            <person name="Takarada H."/>
            <person name="Sekine M."/>
            <person name="Hosoyama A."/>
            <person name="Yamada R."/>
            <person name="Fujisawa T."/>
            <person name="Omata S."/>
            <person name="Shimizu A."/>
            <person name="Tsukatani N."/>
            <person name="Tanikawa S."/>
            <person name="Fujita N."/>
            <person name="Harayama S."/>
        </authorList>
    </citation>
    <scope>NUCLEOTIDE SEQUENCE [LARGE SCALE GENOMIC DNA]</scope>
    <source>
        <strain>B4</strain>
    </source>
</reference>
<gene>
    <name evidence="1" type="primary">dnaA</name>
    <name type="ordered locus">ROP_34830</name>
</gene>
<keyword id="KW-0067">ATP-binding</keyword>
<keyword id="KW-0963">Cytoplasm</keyword>
<keyword id="KW-0235">DNA replication</keyword>
<keyword id="KW-0238">DNA-binding</keyword>
<keyword id="KW-0446">Lipid-binding</keyword>
<keyword id="KW-0547">Nucleotide-binding</keyword>
<organism>
    <name type="scientific">Rhodococcus opacus (strain B4)</name>
    <dbReference type="NCBI Taxonomy" id="632772"/>
    <lineage>
        <taxon>Bacteria</taxon>
        <taxon>Bacillati</taxon>
        <taxon>Actinomycetota</taxon>
        <taxon>Actinomycetes</taxon>
        <taxon>Mycobacteriales</taxon>
        <taxon>Nocardiaceae</taxon>
        <taxon>Rhodococcus</taxon>
    </lineage>
</organism>
<comment type="function">
    <text evidence="1">Plays an essential role in the initiation and regulation of chromosomal replication. ATP-DnaA binds to the origin of replication (oriC) to initiate formation of the DNA replication initiation complex once per cell cycle. Binds the DnaA box (a 9 base pair repeat at the origin) and separates the double-stranded (ds)DNA. Forms a right-handed helical filament on oriC DNA; dsDNA binds to the exterior of the filament while single-stranded (ss)DNA is stabiized in the filament's interior. The ATP-DnaA-oriC complex binds and stabilizes one strand of the AT-rich DNA unwinding element (DUE), permitting loading of DNA polymerase. After initiation quickly degrades to an ADP-DnaA complex that is not apt for DNA replication. Binds acidic phospholipids.</text>
</comment>
<comment type="subunit">
    <text evidence="1">Oligomerizes as a right-handed, spiral filament on DNA at oriC.</text>
</comment>
<comment type="subcellular location">
    <subcellularLocation>
        <location evidence="1">Cytoplasm</location>
    </subcellularLocation>
</comment>
<comment type="domain">
    <text evidence="1">Domain I is involved in oligomerization and binding regulators, domain II is flexibile and of varying length in different bacteria, domain III forms the AAA+ region, while domain IV binds dsDNA.</text>
</comment>
<comment type="similarity">
    <text evidence="1">Belongs to the DnaA family.</text>
</comment>
<dbReference type="EMBL" id="AP011115">
    <property type="protein sequence ID" value="BAH51730.1"/>
    <property type="molecule type" value="Genomic_DNA"/>
</dbReference>
<dbReference type="RefSeq" id="WP_012690676.1">
    <property type="nucleotide sequence ID" value="NC_012522.1"/>
</dbReference>
<dbReference type="SMR" id="C1B7S7"/>
<dbReference type="STRING" id="632772.ROP_34830"/>
<dbReference type="KEGG" id="rop:ROP_34830"/>
<dbReference type="PATRIC" id="fig|632772.20.peg.3648"/>
<dbReference type="HOGENOM" id="CLU_026910_2_0_11"/>
<dbReference type="OrthoDB" id="9807019at2"/>
<dbReference type="Proteomes" id="UP000002212">
    <property type="component" value="Chromosome"/>
</dbReference>
<dbReference type="GO" id="GO:0005737">
    <property type="term" value="C:cytoplasm"/>
    <property type="evidence" value="ECO:0007669"/>
    <property type="project" value="UniProtKB-SubCell"/>
</dbReference>
<dbReference type="GO" id="GO:0005886">
    <property type="term" value="C:plasma membrane"/>
    <property type="evidence" value="ECO:0007669"/>
    <property type="project" value="TreeGrafter"/>
</dbReference>
<dbReference type="GO" id="GO:0005524">
    <property type="term" value="F:ATP binding"/>
    <property type="evidence" value="ECO:0007669"/>
    <property type="project" value="UniProtKB-UniRule"/>
</dbReference>
<dbReference type="GO" id="GO:0016887">
    <property type="term" value="F:ATP hydrolysis activity"/>
    <property type="evidence" value="ECO:0007669"/>
    <property type="project" value="InterPro"/>
</dbReference>
<dbReference type="GO" id="GO:0003688">
    <property type="term" value="F:DNA replication origin binding"/>
    <property type="evidence" value="ECO:0007669"/>
    <property type="project" value="UniProtKB-UniRule"/>
</dbReference>
<dbReference type="GO" id="GO:0008289">
    <property type="term" value="F:lipid binding"/>
    <property type="evidence" value="ECO:0007669"/>
    <property type="project" value="UniProtKB-KW"/>
</dbReference>
<dbReference type="GO" id="GO:0006270">
    <property type="term" value="P:DNA replication initiation"/>
    <property type="evidence" value="ECO:0007669"/>
    <property type="project" value="UniProtKB-UniRule"/>
</dbReference>
<dbReference type="GO" id="GO:0006275">
    <property type="term" value="P:regulation of DNA replication"/>
    <property type="evidence" value="ECO:0007669"/>
    <property type="project" value="UniProtKB-UniRule"/>
</dbReference>
<dbReference type="CDD" id="cd00009">
    <property type="entry name" value="AAA"/>
    <property type="match status" value="1"/>
</dbReference>
<dbReference type="CDD" id="cd06571">
    <property type="entry name" value="Bac_DnaA_C"/>
    <property type="match status" value="1"/>
</dbReference>
<dbReference type="FunFam" id="1.10.1750.10:FF:000002">
    <property type="entry name" value="Chromosomal replication initiator protein DnaA"/>
    <property type="match status" value="1"/>
</dbReference>
<dbReference type="FunFam" id="1.10.8.60:FF:000003">
    <property type="entry name" value="Chromosomal replication initiator protein DnaA"/>
    <property type="match status" value="1"/>
</dbReference>
<dbReference type="FunFam" id="3.40.50.300:FF:000150">
    <property type="entry name" value="Chromosomal replication initiator protein DnaA"/>
    <property type="match status" value="1"/>
</dbReference>
<dbReference type="Gene3D" id="1.10.1750.10">
    <property type="match status" value="1"/>
</dbReference>
<dbReference type="Gene3D" id="1.10.8.60">
    <property type="match status" value="1"/>
</dbReference>
<dbReference type="Gene3D" id="3.40.50.300">
    <property type="entry name" value="P-loop containing nucleotide triphosphate hydrolases"/>
    <property type="match status" value="1"/>
</dbReference>
<dbReference type="HAMAP" id="MF_00377">
    <property type="entry name" value="DnaA_bact"/>
    <property type="match status" value="1"/>
</dbReference>
<dbReference type="InterPro" id="IPR003593">
    <property type="entry name" value="AAA+_ATPase"/>
</dbReference>
<dbReference type="InterPro" id="IPR001957">
    <property type="entry name" value="Chromosome_initiator_DnaA"/>
</dbReference>
<dbReference type="InterPro" id="IPR020591">
    <property type="entry name" value="Chromosome_initiator_DnaA-like"/>
</dbReference>
<dbReference type="InterPro" id="IPR018312">
    <property type="entry name" value="Chromosome_initiator_DnaA_CS"/>
</dbReference>
<dbReference type="InterPro" id="IPR013159">
    <property type="entry name" value="DnaA_C"/>
</dbReference>
<dbReference type="InterPro" id="IPR013317">
    <property type="entry name" value="DnaA_dom"/>
</dbReference>
<dbReference type="InterPro" id="IPR027417">
    <property type="entry name" value="P-loop_NTPase"/>
</dbReference>
<dbReference type="InterPro" id="IPR010921">
    <property type="entry name" value="Trp_repressor/repl_initiator"/>
</dbReference>
<dbReference type="NCBIfam" id="TIGR00362">
    <property type="entry name" value="DnaA"/>
    <property type="match status" value="1"/>
</dbReference>
<dbReference type="NCBIfam" id="NF010686">
    <property type="entry name" value="PRK14086.1"/>
    <property type="match status" value="1"/>
</dbReference>
<dbReference type="PANTHER" id="PTHR30050">
    <property type="entry name" value="CHROMOSOMAL REPLICATION INITIATOR PROTEIN DNAA"/>
    <property type="match status" value="1"/>
</dbReference>
<dbReference type="PANTHER" id="PTHR30050:SF2">
    <property type="entry name" value="CHROMOSOMAL REPLICATION INITIATOR PROTEIN DNAA"/>
    <property type="match status" value="1"/>
</dbReference>
<dbReference type="Pfam" id="PF00308">
    <property type="entry name" value="Bac_DnaA"/>
    <property type="match status" value="1"/>
</dbReference>
<dbReference type="Pfam" id="PF08299">
    <property type="entry name" value="Bac_DnaA_C"/>
    <property type="match status" value="1"/>
</dbReference>
<dbReference type="PRINTS" id="PR00051">
    <property type="entry name" value="DNAA"/>
</dbReference>
<dbReference type="SMART" id="SM00382">
    <property type="entry name" value="AAA"/>
    <property type="match status" value="1"/>
</dbReference>
<dbReference type="SMART" id="SM00760">
    <property type="entry name" value="Bac_DnaA_C"/>
    <property type="match status" value="1"/>
</dbReference>
<dbReference type="SUPFAM" id="SSF52540">
    <property type="entry name" value="P-loop containing nucleoside triphosphate hydrolases"/>
    <property type="match status" value="1"/>
</dbReference>
<dbReference type="SUPFAM" id="SSF48295">
    <property type="entry name" value="TrpR-like"/>
    <property type="match status" value="1"/>
</dbReference>
<dbReference type="PROSITE" id="PS01008">
    <property type="entry name" value="DNAA"/>
    <property type="match status" value="1"/>
</dbReference>
<proteinExistence type="inferred from homology"/>
<accession>C1B7S7</accession>
<feature type="chain" id="PRO_1000189806" description="Chromosomal replication initiator protein DnaA">
    <location>
        <begin position="1"/>
        <end position="528"/>
    </location>
</feature>
<feature type="region of interest" description="Domain I, interacts with DnaA modulators" evidence="1">
    <location>
        <begin position="1"/>
        <end position="104"/>
    </location>
</feature>
<feature type="region of interest" description="Disordered" evidence="2">
    <location>
        <begin position="93"/>
        <end position="159"/>
    </location>
</feature>
<feature type="region of interest" description="Domain II" evidence="1">
    <location>
        <begin position="105"/>
        <end position="187"/>
    </location>
</feature>
<feature type="region of interest" description="Domain III, AAA+ region" evidence="1">
    <location>
        <begin position="188"/>
        <end position="404"/>
    </location>
</feature>
<feature type="region of interest" description="Domain IV, binds dsDNA" evidence="1">
    <location>
        <begin position="405"/>
        <end position="528"/>
    </location>
</feature>
<feature type="compositionally biased region" description="Basic and acidic residues" evidence="2">
    <location>
        <begin position="104"/>
        <end position="123"/>
    </location>
</feature>
<feature type="compositionally biased region" description="Acidic residues" evidence="2">
    <location>
        <begin position="149"/>
        <end position="159"/>
    </location>
</feature>
<feature type="binding site" evidence="1">
    <location>
        <position position="232"/>
    </location>
    <ligand>
        <name>ATP</name>
        <dbReference type="ChEBI" id="CHEBI:30616"/>
    </ligand>
</feature>
<feature type="binding site" evidence="1">
    <location>
        <position position="234"/>
    </location>
    <ligand>
        <name>ATP</name>
        <dbReference type="ChEBI" id="CHEBI:30616"/>
    </ligand>
</feature>
<feature type="binding site" evidence="1">
    <location>
        <position position="235"/>
    </location>
    <ligand>
        <name>ATP</name>
        <dbReference type="ChEBI" id="CHEBI:30616"/>
    </ligand>
</feature>
<feature type="binding site" evidence="1">
    <location>
        <position position="236"/>
    </location>
    <ligand>
        <name>ATP</name>
        <dbReference type="ChEBI" id="CHEBI:30616"/>
    </ligand>
</feature>
<name>DNAA_RHOOB</name>
<sequence length="528" mass="59121">MNDDPNALARIWIDVVADLTSDSPGGDLPPLTRGQKAWLALVKPLTLAQGFALLSVPSPFAQEAIERDLREPILHALGRHLGEQVEGLGVRIAAPVDDEPESEAPSRERRPDPEPVHTPRHLEPSVTSSGTFRRRRFGSGDDQPYSDTTDFEEVDDDSEALASVHESWPSYFTKPPAGPAPAATGGNSLNAKYTFDTFVIGSSNRFAHAAAVAIAEAPARAYNPLFIWGASGLGKTHLLHAAGHYAQRLFPGMRVKYVSTEEFTNDFINSLRDDRKVAFKRRYRETDVLLVDDIQFIEGKEGIQEEFFHTFNTLHNANKQIVVSSDRPPKQLATLEERLRTRFEWGLITDVQPPELETRIAILSKKARMDRLEVPDDVLELIASRIERNIRELEGALIRVTAFASLNRQPLDLTLAEVVLRDLMPDSSSLEINAATIMAVTAEYFNMSIDDLCGPGKARPLASARQISMYLCRELTDLSLPKIGQTFGRDHTTVMYADKKIRKEMTERRKVYDQVQELTARIKQRSKR</sequence>
<protein>
    <recommendedName>
        <fullName evidence="1">Chromosomal replication initiator protein DnaA</fullName>
    </recommendedName>
</protein>